<gene>
    <name evidence="1" type="primary">pyrF</name>
    <name type="ordered locus">Francci3_3197</name>
</gene>
<accession>Q2J838</accession>
<name>PYRF_FRACC</name>
<organism>
    <name type="scientific">Frankia casuarinae (strain DSM 45818 / CECT 9043 / HFP020203 / CcI3)</name>
    <dbReference type="NCBI Taxonomy" id="106370"/>
    <lineage>
        <taxon>Bacteria</taxon>
        <taxon>Bacillati</taxon>
        <taxon>Actinomycetota</taxon>
        <taxon>Actinomycetes</taxon>
        <taxon>Frankiales</taxon>
        <taxon>Frankiaceae</taxon>
        <taxon>Frankia</taxon>
    </lineage>
</organism>
<comment type="function">
    <text evidence="1">Catalyzes the decarboxylation of orotidine 5'-monophosphate (OMP) to uridine 5'-monophosphate (UMP).</text>
</comment>
<comment type="catalytic activity">
    <reaction evidence="1">
        <text>orotidine 5'-phosphate + H(+) = UMP + CO2</text>
        <dbReference type="Rhea" id="RHEA:11596"/>
        <dbReference type="ChEBI" id="CHEBI:15378"/>
        <dbReference type="ChEBI" id="CHEBI:16526"/>
        <dbReference type="ChEBI" id="CHEBI:57538"/>
        <dbReference type="ChEBI" id="CHEBI:57865"/>
        <dbReference type="EC" id="4.1.1.23"/>
    </reaction>
</comment>
<comment type="pathway">
    <text evidence="1">Pyrimidine metabolism; UMP biosynthesis via de novo pathway; UMP from orotate: step 2/2.</text>
</comment>
<comment type="subunit">
    <text evidence="1">Homodimer.</text>
</comment>
<comment type="similarity">
    <text evidence="1">Belongs to the OMP decarboxylase family. Type 1 subfamily.</text>
</comment>
<keyword id="KW-0210">Decarboxylase</keyword>
<keyword id="KW-0456">Lyase</keyword>
<keyword id="KW-0665">Pyrimidine biosynthesis</keyword>
<keyword id="KW-1185">Reference proteome</keyword>
<sequence length="274" mass="26909">MSAGRRSSGGRSAAAPRFTPPRGRAPLAVALDAPDAATALRWAAAVAPTVAVLKIGLELFYREGPAIVTALRAAGVLAGAGGAAVAAGGTGSAPELFLDLKLHDIPATVAGGMRSITPLGPRFVTVHAAGGAAMIRAAIEAAPDVEVAVVTVLTSLDVAALSAIGLAGPPSDAVRRLAVLAVEAGARTLVCSPREVRMVRMELGSNVTLITPGVRPAGSETGDQARTATPEAALVGGSDLVVVGRPITGAPDPGVAARAIAAGLSAAGRAADLL</sequence>
<reference key="1">
    <citation type="journal article" date="2007" name="Genome Res.">
        <title>Genome characteristics of facultatively symbiotic Frankia sp. strains reflect host range and host plant biogeography.</title>
        <authorList>
            <person name="Normand P."/>
            <person name="Lapierre P."/>
            <person name="Tisa L.S."/>
            <person name="Gogarten J.P."/>
            <person name="Alloisio N."/>
            <person name="Bagnarol E."/>
            <person name="Bassi C.A."/>
            <person name="Berry A.M."/>
            <person name="Bickhart D.M."/>
            <person name="Choisne N."/>
            <person name="Couloux A."/>
            <person name="Cournoyer B."/>
            <person name="Cruveiller S."/>
            <person name="Daubin V."/>
            <person name="Demange N."/>
            <person name="Francino M.P."/>
            <person name="Goltsman E."/>
            <person name="Huang Y."/>
            <person name="Kopp O.R."/>
            <person name="Labarre L."/>
            <person name="Lapidus A."/>
            <person name="Lavire C."/>
            <person name="Marechal J."/>
            <person name="Martinez M."/>
            <person name="Mastronunzio J.E."/>
            <person name="Mullin B.C."/>
            <person name="Niemann J."/>
            <person name="Pujic P."/>
            <person name="Rawnsley T."/>
            <person name="Rouy Z."/>
            <person name="Schenowitz C."/>
            <person name="Sellstedt A."/>
            <person name="Tavares F."/>
            <person name="Tomkins J.P."/>
            <person name="Vallenet D."/>
            <person name="Valverde C."/>
            <person name="Wall L.G."/>
            <person name="Wang Y."/>
            <person name="Medigue C."/>
            <person name="Benson D.R."/>
        </authorList>
    </citation>
    <scope>NUCLEOTIDE SEQUENCE [LARGE SCALE GENOMIC DNA]</scope>
    <source>
        <strain>DSM 45818 / CECT 9043 / HFP020203 / CcI3</strain>
    </source>
</reference>
<evidence type="ECO:0000255" key="1">
    <source>
        <dbReference type="HAMAP-Rule" id="MF_01200"/>
    </source>
</evidence>
<evidence type="ECO:0000256" key="2">
    <source>
        <dbReference type="SAM" id="MobiDB-lite"/>
    </source>
</evidence>
<dbReference type="EC" id="4.1.1.23" evidence="1"/>
<dbReference type="EMBL" id="CP000249">
    <property type="protein sequence ID" value="ABD12554.1"/>
    <property type="molecule type" value="Genomic_DNA"/>
</dbReference>
<dbReference type="RefSeq" id="WP_011437582.1">
    <property type="nucleotide sequence ID" value="NZ_LRTJ01000064.1"/>
</dbReference>
<dbReference type="SMR" id="Q2J838"/>
<dbReference type="STRING" id="106370.Francci3_3197"/>
<dbReference type="KEGG" id="fra:Francci3_3197"/>
<dbReference type="eggNOG" id="COG0284">
    <property type="taxonomic scope" value="Bacteria"/>
</dbReference>
<dbReference type="HOGENOM" id="CLU_067069_1_0_11"/>
<dbReference type="OrthoDB" id="9806203at2"/>
<dbReference type="PhylomeDB" id="Q2J838"/>
<dbReference type="UniPathway" id="UPA00070">
    <property type="reaction ID" value="UER00120"/>
</dbReference>
<dbReference type="Proteomes" id="UP000001937">
    <property type="component" value="Chromosome"/>
</dbReference>
<dbReference type="GO" id="GO:0005829">
    <property type="term" value="C:cytosol"/>
    <property type="evidence" value="ECO:0007669"/>
    <property type="project" value="TreeGrafter"/>
</dbReference>
<dbReference type="GO" id="GO:0004590">
    <property type="term" value="F:orotidine-5'-phosphate decarboxylase activity"/>
    <property type="evidence" value="ECO:0007669"/>
    <property type="project" value="UniProtKB-UniRule"/>
</dbReference>
<dbReference type="GO" id="GO:0006207">
    <property type="term" value="P:'de novo' pyrimidine nucleobase biosynthetic process"/>
    <property type="evidence" value="ECO:0007669"/>
    <property type="project" value="InterPro"/>
</dbReference>
<dbReference type="GO" id="GO:0044205">
    <property type="term" value="P:'de novo' UMP biosynthetic process"/>
    <property type="evidence" value="ECO:0007669"/>
    <property type="project" value="UniProtKB-UniRule"/>
</dbReference>
<dbReference type="CDD" id="cd04725">
    <property type="entry name" value="OMP_decarboxylase_like"/>
    <property type="match status" value="1"/>
</dbReference>
<dbReference type="Gene3D" id="3.20.20.70">
    <property type="entry name" value="Aldolase class I"/>
    <property type="match status" value="1"/>
</dbReference>
<dbReference type="HAMAP" id="MF_01200_B">
    <property type="entry name" value="OMPdecase_type1_B"/>
    <property type="match status" value="1"/>
</dbReference>
<dbReference type="InterPro" id="IPR013785">
    <property type="entry name" value="Aldolase_TIM"/>
</dbReference>
<dbReference type="InterPro" id="IPR014732">
    <property type="entry name" value="OMPdecase"/>
</dbReference>
<dbReference type="InterPro" id="IPR018089">
    <property type="entry name" value="OMPdecase_AS"/>
</dbReference>
<dbReference type="InterPro" id="IPR047596">
    <property type="entry name" value="OMPdecase_bac"/>
</dbReference>
<dbReference type="InterPro" id="IPR001754">
    <property type="entry name" value="OMPdeCOase_dom"/>
</dbReference>
<dbReference type="InterPro" id="IPR011060">
    <property type="entry name" value="RibuloseP-bd_barrel"/>
</dbReference>
<dbReference type="NCBIfam" id="TIGR01740">
    <property type="entry name" value="pyrF"/>
    <property type="match status" value="1"/>
</dbReference>
<dbReference type="PANTHER" id="PTHR32119">
    <property type="entry name" value="OROTIDINE 5'-PHOSPHATE DECARBOXYLASE"/>
    <property type="match status" value="1"/>
</dbReference>
<dbReference type="PANTHER" id="PTHR32119:SF2">
    <property type="entry name" value="OROTIDINE 5'-PHOSPHATE DECARBOXYLASE"/>
    <property type="match status" value="1"/>
</dbReference>
<dbReference type="Pfam" id="PF00215">
    <property type="entry name" value="OMPdecase"/>
    <property type="match status" value="1"/>
</dbReference>
<dbReference type="SMART" id="SM00934">
    <property type="entry name" value="OMPdecase"/>
    <property type="match status" value="1"/>
</dbReference>
<dbReference type="SUPFAM" id="SSF51366">
    <property type="entry name" value="Ribulose-phoshate binding barrel"/>
    <property type="match status" value="1"/>
</dbReference>
<dbReference type="PROSITE" id="PS00156">
    <property type="entry name" value="OMPDECASE"/>
    <property type="match status" value="1"/>
</dbReference>
<feature type="chain" id="PRO_0000241859" description="Orotidine 5'-phosphate decarboxylase">
    <location>
        <begin position="1"/>
        <end position="274"/>
    </location>
</feature>
<feature type="region of interest" description="Disordered" evidence="2">
    <location>
        <begin position="1"/>
        <end position="21"/>
    </location>
</feature>
<feature type="compositionally biased region" description="Low complexity" evidence="2">
    <location>
        <begin position="1"/>
        <end position="15"/>
    </location>
</feature>
<feature type="active site" description="Proton donor" evidence="1">
    <location>
        <position position="101"/>
    </location>
</feature>
<feature type="binding site" evidence="1">
    <location>
        <position position="32"/>
    </location>
    <ligand>
        <name>substrate</name>
    </ligand>
</feature>
<feature type="binding site" evidence="1">
    <location>
        <position position="54"/>
    </location>
    <ligand>
        <name>substrate</name>
    </ligand>
</feature>
<feature type="binding site" evidence="1">
    <location>
        <begin position="99"/>
        <end position="108"/>
    </location>
    <ligand>
        <name>substrate</name>
    </ligand>
</feature>
<feature type="binding site" evidence="1">
    <location>
        <position position="154"/>
    </location>
    <ligand>
        <name>substrate</name>
    </ligand>
</feature>
<feature type="binding site" evidence="1">
    <location>
        <position position="215"/>
    </location>
    <ligand>
        <name>substrate</name>
    </ligand>
</feature>
<feature type="binding site" evidence="1">
    <location>
        <position position="224"/>
    </location>
    <ligand>
        <name>substrate</name>
    </ligand>
</feature>
<feature type="binding site" evidence="1">
    <location>
        <position position="244"/>
    </location>
    <ligand>
        <name>substrate</name>
    </ligand>
</feature>
<feature type="binding site" evidence="1">
    <location>
        <position position="245"/>
    </location>
    <ligand>
        <name>substrate</name>
    </ligand>
</feature>
<proteinExistence type="inferred from homology"/>
<protein>
    <recommendedName>
        <fullName evidence="1">Orotidine 5'-phosphate decarboxylase</fullName>
        <ecNumber evidence="1">4.1.1.23</ecNumber>
    </recommendedName>
    <alternativeName>
        <fullName evidence="1">OMP decarboxylase</fullName>
        <shortName evidence="1">OMPDCase</shortName>
        <shortName evidence="1">OMPdecase</shortName>
    </alternativeName>
</protein>